<reference key="1">
    <citation type="journal article" date="1983" name="Proc. Natl. Acad. Sci. U.S.A.">
        <title>Unusual structure of the chicken embryonic alpha-globin gene, pi'.</title>
        <authorList>
            <person name="Engel J.D."/>
            <person name="Rusling D.J."/>
            <person name="McCune K.C."/>
            <person name="Dodgson J.B."/>
        </authorList>
    </citation>
    <scope>NUCLEOTIDE SEQUENCE [GENOMIC DNA]</scope>
</reference>
<reference key="2">
    <citation type="journal article" date="2001" name="Hum. Mol. Genet.">
        <title>Comparative genome analysis delimits a chromosomal domain and identifies key regulatory elements in the alpha globin cluster.</title>
        <authorList>
            <person name="Flint J."/>
            <person name="Tufarelli C."/>
            <person name="Peden J."/>
            <person name="Clark K."/>
            <person name="Daniels R.J."/>
            <person name="Hardison R."/>
            <person name="Miller W."/>
            <person name="Philipsen S."/>
            <person name="Tan-Un K.C."/>
            <person name="McMorrow T."/>
            <person name="Frampton J."/>
            <person name="Alter B.P."/>
            <person name="Frischauf A.-M."/>
            <person name="Higgs D.R."/>
        </authorList>
    </citation>
    <scope>NUCLEOTIDE SEQUENCE [GENOMIC DNA]</scope>
</reference>
<reference key="3">
    <citation type="submission" date="2002-04" db="EMBL/GenBank/DDBJ databases">
        <title>Organization of the chicken domain of alpha-globin genes.</title>
        <authorList>
            <person name="Zhao Z."/>
            <person name="Sjakste N."/>
            <person name="De Moura-Gallo C.V."/>
            <person name="Ioudinkova E.S."/>
            <person name="Razin S.V."/>
            <person name="Scherrer K."/>
        </authorList>
    </citation>
    <scope>NUCLEOTIDE SEQUENCE [GENOMIC DNA]</scope>
</reference>
<reference key="4">
    <citation type="journal article" date="1980" name="J. Biol. Chem.">
        <title>Complete amino acid sequences of the major early embryonic alpha-like globins of the chicken.</title>
        <authorList>
            <person name="Chapman B.S."/>
            <person name="Tobin A.J."/>
            <person name="Hood L.E."/>
        </authorList>
    </citation>
    <scope>PROTEIN SEQUENCE OF 2-142</scope>
    <scope>VARIANT GLU-125</scope>
</reference>
<evidence type="ECO:0000255" key="1">
    <source>
        <dbReference type="PROSITE-ProRule" id="PRU00238"/>
    </source>
</evidence>
<evidence type="ECO:0000269" key="2">
    <source>
    </source>
</evidence>
<proteinExistence type="evidence at protein level"/>
<dbReference type="EMBL" id="V00408">
    <property type="protein sequence ID" value="CAA23699.1"/>
    <property type="molecule type" value="Genomic_DNA"/>
</dbReference>
<dbReference type="EMBL" id="AY016020">
    <property type="protein sequence ID" value="AAL35402.1"/>
    <property type="molecule type" value="Genomic_DNA"/>
</dbReference>
<dbReference type="EMBL" id="AF098919">
    <property type="protein sequence ID" value="AAM09071.1"/>
    <property type="molecule type" value="Genomic_DNA"/>
</dbReference>
<dbReference type="PIR" id="A93941">
    <property type="entry name" value="HACHPE"/>
</dbReference>
<dbReference type="RefSeq" id="NP_001004374.1">
    <property type="nucleotide sequence ID" value="NM_001004374.3"/>
</dbReference>
<dbReference type="SMR" id="P02007"/>
<dbReference type="FunCoup" id="P02007">
    <property type="interactions" value="22"/>
</dbReference>
<dbReference type="STRING" id="9031.ENSGALP00000012046"/>
<dbReference type="PaxDb" id="9031-ENSGALP00000038921"/>
<dbReference type="Ensembl" id="ENSGALT00010046531.1">
    <property type="protein sequence ID" value="ENSGALP00010027704.1"/>
    <property type="gene ID" value="ENSGALG00010019247.1"/>
</dbReference>
<dbReference type="GeneID" id="416650"/>
<dbReference type="KEGG" id="gga:416650"/>
<dbReference type="CTD" id="3050"/>
<dbReference type="VEuPathDB" id="HostDB:geneid_416650"/>
<dbReference type="eggNOG" id="KOG3378">
    <property type="taxonomic scope" value="Eukaryota"/>
</dbReference>
<dbReference type="GeneTree" id="ENSGT00940000158623"/>
<dbReference type="HOGENOM" id="CLU_003827_10_2_1"/>
<dbReference type="InParanoid" id="P02007"/>
<dbReference type="OMA" id="VIATMFP"/>
<dbReference type="OrthoDB" id="8751793at2759"/>
<dbReference type="PhylomeDB" id="P02007"/>
<dbReference type="TreeFam" id="TF332328"/>
<dbReference type="PRO" id="PR:P02007"/>
<dbReference type="Proteomes" id="UP000000539">
    <property type="component" value="Chromosome 14"/>
</dbReference>
<dbReference type="Bgee" id="ENSGALG00000023740">
    <property type="expression patterns" value="Expressed in kidney and 4 other cell types or tissues"/>
</dbReference>
<dbReference type="GO" id="GO:0031838">
    <property type="term" value="C:haptoglobin-hemoglobin complex"/>
    <property type="evidence" value="ECO:0000318"/>
    <property type="project" value="GO_Central"/>
</dbReference>
<dbReference type="GO" id="GO:0005833">
    <property type="term" value="C:hemoglobin complex"/>
    <property type="evidence" value="ECO:0000318"/>
    <property type="project" value="GO_Central"/>
</dbReference>
<dbReference type="GO" id="GO:0020037">
    <property type="term" value="F:heme binding"/>
    <property type="evidence" value="ECO:0000318"/>
    <property type="project" value="GO_Central"/>
</dbReference>
<dbReference type="GO" id="GO:0005506">
    <property type="term" value="F:iron ion binding"/>
    <property type="evidence" value="ECO:0007669"/>
    <property type="project" value="InterPro"/>
</dbReference>
<dbReference type="GO" id="GO:0019825">
    <property type="term" value="F:oxygen binding"/>
    <property type="evidence" value="ECO:0000318"/>
    <property type="project" value="GO_Central"/>
</dbReference>
<dbReference type="GO" id="GO:0005344">
    <property type="term" value="F:oxygen carrier activity"/>
    <property type="evidence" value="ECO:0000318"/>
    <property type="project" value="GO_Central"/>
</dbReference>
<dbReference type="GO" id="GO:0098869">
    <property type="term" value="P:cellular oxidant detoxification"/>
    <property type="evidence" value="ECO:0007669"/>
    <property type="project" value="GOC"/>
</dbReference>
<dbReference type="GO" id="GO:0043249">
    <property type="term" value="P:erythrocyte maturation"/>
    <property type="evidence" value="ECO:0007669"/>
    <property type="project" value="Ensembl"/>
</dbReference>
<dbReference type="GO" id="GO:0042744">
    <property type="term" value="P:hydrogen peroxide catabolic process"/>
    <property type="evidence" value="ECO:0000318"/>
    <property type="project" value="GO_Central"/>
</dbReference>
<dbReference type="GO" id="GO:0000122">
    <property type="term" value="P:negative regulation of transcription by RNA polymerase II"/>
    <property type="evidence" value="ECO:0007669"/>
    <property type="project" value="Ensembl"/>
</dbReference>
<dbReference type="CDD" id="cd08927">
    <property type="entry name" value="Hb-alpha-like"/>
    <property type="match status" value="1"/>
</dbReference>
<dbReference type="FunFam" id="1.10.490.10:FF:000002">
    <property type="entry name" value="Hemoglobin subunit alpha"/>
    <property type="match status" value="1"/>
</dbReference>
<dbReference type="Gene3D" id="1.10.490.10">
    <property type="entry name" value="Globins"/>
    <property type="match status" value="1"/>
</dbReference>
<dbReference type="InterPro" id="IPR000971">
    <property type="entry name" value="Globin"/>
</dbReference>
<dbReference type="InterPro" id="IPR009050">
    <property type="entry name" value="Globin-like_sf"/>
</dbReference>
<dbReference type="InterPro" id="IPR012292">
    <property type="entry name" value="Globin/Proto"/>
</dbReference>
<dbReference type="InterPro" id="IPR002338">
    <property type="entry name" value="Hemoglobin_a-typ"/>
</dbReference>
<dbReference type="InterPro" id="IPR050056">
    <property type="entry name" value="Hemoglobin_oxygen_transport"/>
</dbReference>
<dbReference type="InterPro" id="IPR002339">
    <property type="entry name" value="Hemoglobin_pi"/>
</dbReference>
<dbReference type="PANTHER" id="PTHR11442">
    <property type="entry name" value="HEMOGLOBIN FAMILY MEMBER"/>
    <property type="match status" value="1"/>
</dbReference>
<dbReference type="PANTHER" id="PTHR11442:SF41">
    <property type="entry name" value="HEMOGLOBIN SUBUNIT ZETA"/>
    <property type="match status" value="1"/>
</dbReference>
<dbReference type="Pfam" id="PF00042">
    <property type="entry name" value="Globin"/>
    <property type="match status" value="1"/>
</dbReference>
<dbReference type="PRINTS" id="PR00612">
    <property type="entry name" value="ALPHAHAEM"/>
</dbReference>
<dbReference type="PRINTS" id="PR00815">
    <property type="entry name" value="PIHAEM"/>
</dbReference>
<dbReference type="SUPFAM" id="SSF46458">
    <property type="entry name" value="Globin-like"/>
    <property type="match status" value="1"/>
</dbReference>
<dbReference type="PROSITE" id="PS01033">
    <property type="entry name" value="GLOBIN"/>
    <property type="match status" value="1"/>
</dbReference>
<accession>P02007</accession>
<accession>Q78AK0</accession>
<sequence>MALTQAEKAAVTTIWAKVATQIESIGLESLERLFASYPQTKTYFPHFDVSQGSVQLRGHGSKVLNAIGEAVKNIDDIRGALAKLSELHAYILRVDPVNFKLLSHCILCSVAARYPSDFTPEVHAAWDKFLSSISSVLTEKYR</sequence>
<protein>
    <recommendedName>
        <fullName>Hemoglobin subunit pi</fullName>
    </recommendedName>
    <alternativeName>
        <fullName>Hemoglobin pi chain</fullName>
    </alternativeName>
    <alternativeName>
        <fullName>Hemoglobin pi' chain</fullName>
    </alternativeName>
    <alternativeName>
        <fullName>Pi-globin</fullName>
    </alternativeName>
</protein>
<name>HBPI_CHICK</name>
<keyword id="KW-0903">Direct protein sequencing</keyword>
<keyword id="KW-0349">Heme</keyword>
<keyword id="KW-0408">Iron</keyword>
<keyword id="KW-0479">Metal-binding</keyword>
<keyword id="KW-0561">Oxygen transport</keyword>
<keyword id="KW-1185">Reference proteome</keyword>
<keyword id="KW-0813">Transport</keyword>
<organism>
    <name type="scientific">Gallus gallus</name>
    <name type="common">Chicken</name>
    <dbReference type="NCBI Taxonomy" id="9031"/>
    <lineage>
        <taxon>Eukaryota</taxon>
        <taxon>Metazoa</taxon>
        <taxon>Chordata</taxon>
        <taxon>Craniata</taxon>
        <taxon>Vertebrata</taxon>
        <taxon>Euteleostomi</taxon>
        <taxon>Archelosauria</taxon>
        <taxon>Archosauria</taxon>
        <taxon>Dinosauria</taxon>
        <taxon>Saurischia</taxon>
        <taxon>Theropoda</taxon>
        <taxon>Coelurosauria</taxon>
        <taxon>Aves</taxon>
        <taxon>Neognathae</taxon>
        <taxon>Galloanserae</taxon>
        <taxon>Galliformes</taxon>
        <taxon>Phasianidae</taxon>
        <taxon>Phasianinae</taxon>
        <taxon>Gallus</taxon>
    </lineage>
</organism>
<feature type="initiator methionine" description="Removed" evidence="2">
    <location>
        <position position="1"/>
    </location>
</feature>
<feature type="chain" id="PRO_0000053272" description="Hemoglobin subunit pi">
    <location>
        <begin position="2"/>
        <end position="142"/>
    </location>
</feature>
<feature type="domain" description="Globin" evidence="1">
    <location>
        <begin position="2"/>
        <end position="142"/>
    </location>
</feature>
<feature type="binding site" description="distal binding residue">
    <location>
        <position position="59"/>
    </location>
    <ligand>
        <name>heme b</name>
        <dbReference type="ChEBI" id="CHEBI:60344"/>
    </ligand>
    <ligandPart>
        <name>Fe</name>
        <dbReference type="ChEBI" id="CHEBI:18248"/>
    </ligandPart>
</feature>
<feature type="binding site" description="proximal binding residue">
    <location>
        <position position="88"/>
    </location>
    <ligand>
        <name>heme b</name>
        <dbReference type="ChEBI" id="CHEBI:60344"/>
    </ligand>
    <ligandPart>
        <name>Fe</name>
        <dbReference type="ChEBI" id="CHEBI:18248"/>
    </ligandPart>
</feature>
<feature type="sequence variant" evidence="2">
    <original>A</original>
    <variation>E</variation>
    <location>
        <position position="125"/>
    </location>
</feature>
<comment type="function">
    <text>The pi' chain is the counterpart of the alpha chain in the major early embryonic hemoglobin P.</text>
</comment>
<comment type="miscellaneous">
    <text>Only one chromosomal locus was found, suggesting that the pi gene either does not exist or is an allele of the pi' gene.</text>
</comment>
<comment type="similarity">
    <text evidence="1">Belongs to the globin family.</text>
</comment>